<organism>
    <name type="scientific">Rattus norvegicus</name>
    <name type="common">Rat</name>
    <dbReference type="NCBI Taxonomy" id="10116"/>
    <lineage>
        <taxon>Eukaryota</taxon>
        <taxon>Metazoa</taxon>
        <taxon>Chordata</taxon>
        <taxon>Craniata</taxon>
        <taxon>Vertebrata</taxon>
        <taxon>Euteleostomi</taxon>
        <taxon>Mammalia</taxon>
        <taxon>Eutheria</taxon>
        <taxon>Euarchontoglires</taxon>
        <taxon>Glires</taxon>
        <taxon>Rodentia</taxon>
        <taxon>Myomorpha</taxon>
        <taxon>Muroidea</taxon>
        <taxon>Muridae</taxon>
        <taxon>Murinae</taxon>
        <taxon>Rattus</taxon>
    </lineage>
</organism>
<sequence length="1367" mass="156232">METQLQSIFEEVVKTEIIEEAFPGMFMDTPEDEKTKLISCLAAFRQFWNGLSQESHEQCVQWIVKFIHGQHSPKRISFLYDCLAMAVETGLLPPRMVCESLINSDTLEWERTQLWALTFKLVRKIIGGVDYKGVRDLLKVILEKILTIPNTVSSAVVQQLLAAREVIAYILERNACLLPAYFAVTEIRKLYPEGKLPHWLLGNLVSDFVDTFRPTARINSICGRCSLLPVVNNSGAICNSWKLDPATLRFPLKGLLPYDKDLFEPQTALLRYVLEQPYSRDMVCNMLGLNKQHKQRCPVLEDQLVDLVVYAMERSETEEKFDDGGTSQLLWQHLSSQLIFFVLFQFASFPHMVLSLHQKLAGRGLIKGRDHLMWVLLQFISGSIQKNALADFLPVMKLFDLLYPEKECIPVPDINKPQSTHAFAMTCIWIHLNRKAQNDNSKLQIPIPHSLKLHHEFLQQSLRNKSLQMNDYKIALLCNAYSTNSECFTLPMGALVETIYGNGIMRVPLPGTSCLASASVTPLPMNLLDSLTVHAKMSLIHSIATRVIKLAHTKSSVALAPALVETYSRLLVYMEIESLGIKGFISQLLPTVFKSHAWGILHTLLEMFSHRMHHIQPHYRVQLLSHLHTLAAVAQTNQNQLHLCVESTALRLITALGSSEVQPQFTRFLNDPKTVLSAESEELNRALILTLARATHVTDFFTGSDSIQGTWCKDILQTIMTFTPHNWASHTLSCFPAPLQAFFKQNNVPQESRFNLKKNVEEEYRKWKSMTDENEIITQFSMQGFPPLFLCLLWKMLLETDHISQIGYKVLERIGARALVAHVRTFADFLVYEFSTSAGGQQLNKCIEILNDMVWKYNIVTLDRLILCLAMRSHEGNEAQVCYFIIQLLLLKPNDFRNRVSDFVKENSPEHWLQSDWHTKHMSYHKKYPEKLYFEGLAEQVDPPVPIQSPYLPIYFGNVCLRFLPVFDIVIHRFLELLPVSKSLETLLDHLGGLYKFHDRPVTYLYNTLHYYEMCLRNRDHLKRKLVHAIIGSLKDNRPQGWCLSDTYLKHAMNAREDNPWVPEDSYYCKLIGRLVDTMAGKSPGPFPNCDWRFNEFPNPAAHALHVTCVELMALAVPGKDVGNALLNVVLKSQPLVPRENITAWMNAIGLIITALPEPYWIVLHDRIVSVISSSSLTSETEWVGYPFRLFDFTACHQSYSEMSCSYTLALAHAVWHHSSIGQLSLIPKFLTEVLLPVVKTEFQLLYVYHLVGPFLQRFQQERTRCMIEIGVAFYDMLLNVDQCSTHLNYMDPICDFLYHMKYMFTGDSVKEQVEKIICNLKPALKLRLRFITHISKMEPAVPPQALSSGSPAPQANQVPTALPVTQ</sequence>
<reference key="1">
    <citation type="journal article" date="2004" name="Nature">
        <title>Genome sequence of the Brown Norway rat yields insights into mammalian evolution.</title>
        <authorList>
            <person name="Gibbs R.A."/>
            <person name="Weinstock G.M."/>
            <person name="Metzker M.L."/>
            <person name="Muzny D.M."/>
            <person name="Sodergren E.J."/>
            <person name="Scherer S."/>
            <person name="Scott G."/>
            <person name="Steffen D."/>
            <person name="Worley K.C."/>
            <person name="Burch P.E."/>
            <person name="Okwuonu G."/>
            <person name="Hines S."/>
            <person name="Lewis L."/>
            <person name="Deramo C."/>
            <person name="Delgado O."/>
            <person name="Dugan-Rocha S."/>
            <person name="Miner G."/>
            <person name="Morgan M."/>
            <person name="Hawes A."/>
            <person name="Gill R."/>
            <person name="Holt R.A."/>
            <person name="Adams M.D."/>
            <person name="Amanatides P.G."/>
            <person name="Baden-Tillson H."/>
            <person name="Barnstead M."/>
            <person name="Chin S."/>
            <person name="Evans C.A."/>
            <person name="Ferriera S."/>
            <person name="Fosler C."/>
            <person name="Glodek A."/>
            <person name="Gu Z."/>
            <person name="Jennings D."/>
            <person name="Kraft C.L."/>
            <person name="Nguyen T."/>
            <person name="Pfannkoch C.M."/>
            <person name="Sitter C."/>
            <person name="Sutton G.G."/>
            <person name="Venter J.C."/>
            <person name="Woodage T."/>
            <person name="Smith D."/>
            <person name="Lee H.-M."/>
            <person name="Gustafson E."/>
            <person name="Cahill P."/>
            <person name="Kana A."/>
            <person name="Doucette-Stamm L."/>
            <person name="Weinstock K."/>
            <person name="Fechtel K."/>
            <person name="Weiss R.B."/>
            <person name="Dunn D.M."/>
            <person name="Green E.D."/>
            <person name="Blakesley R.W."/>
            <person name="Bouffard G.G."/>
            <person name="De Jong P.J."/>
            <person name="Osoegawa K."/>
            <person name="Zhu B."/>
            <person name="Marra M."/>
            <person name="Schein J."/>
            <person name="Bosdet I."/>
            <person name="Fjell C."/>
            <person name="Jones S."/>
            <person name="Krzywinski M."/>
            <person name="Mathewson C."/>
            <person name="Siddiqui A."/>
            <person name="Wye N."/>
            <person name="McPherson J."/>
            <person name="Zhao S."/>
            <person name="Fraser C.M."/>
            <person name="Shetty J."/>
            <person name="Shatsman S."/>
            <person name="Geer K."/>
            <person name="Chen Y."/>
            <person name="Abramzon S."/>
            <person name="Nierman W.C."/>
            <person name="Havlak P.H."/>
            <person name="Chen R."/>
            <person name="Durbin K.J."/>
            <person name="Egan A."/>
            <person name="Ren Y."/>
            <person name="Song X.-Z."/>
            <person name="Li B."/>
            <person name="Liu Y."/>
            <person name="Qin X."/>
            <person name="Cawley S."/>
            <person name="Cooney A.J."/>
            <person name="D'Souza L.M."/>
            <person name="Martin K."/>
            <person name="Wu J.Q."/>
            <person name="Gonzalez-Garay M.L."/>
            <person name="Jackson A.R."/>
            <person name="Kalafus K.J."/>
            <person name="McLeod M.P."/>
            <person name="Milosavljevic A."/>
            <person name="Virk D."/>
            <person name="Volkov A."/>
            <person name="Wheeler D.A."/>
            <person name="Zhang Z."/>
            <person name="Bailey J.A."/>
            <person name="Eichler E.E."/>
            <person name="Tuzun E."/>
            <person name="Birney E."/>
            <person name="Mongin E."/>
            <person name="Ureta-Vidal A."/>
            <person name="Woodwark C."/>
            <person name="Zdobnov E."/>
            <person name="Bork P."/>
            <person name="Suyama M."/>
            <person name="Torrents D."/>
            <person name="Alexandersson M."/>
            <person name="Trask B.J."/>
            <person name="Young J.M."/>
            <person name="Huang H."/>
            <person name="Wang H."/>
            <person name="Xing H."/>
            <person name="Daniels S."/>
            <person name="Gietzen D."/>
            <person name="Schmidt J."/>
            <person name="Stevens K."/>
            <person name="Vitt U."/>
            <person name="Wingrove J."/>
            <person name="Camara F."/>
            <person name="Mar Alba M."/>
            <person name="Abril J.F."/>
            <person name="Guigo R."/>
            <person name="Smit A."/>
            <person name="Dubchak I."/>
            <person name="Rubin E.M."/>
            <person name="Couronne O."/>
            <person name="Poliakov A."/>
            <person name="Huebner N."/>
            <person name="Ganten D."/>
            <person name="Goesele C."/>
            <person name="Hummel O."/>
            <person name="Kreitler T."/>
            <person name="Lee Y.-A."/>
            <person name="Monti J."/>
            <person name="Schulz H."/>
            <person name="Zimdahl H."/>
            <person name="Himmelbauer H."/>
            <person name="Lehrach H."/>
            <person name="Jacob H.J."/>
            <person name="Bromberg S."/>
            <person name="Gullings-Handley J."/>
            <person name="Jensen-Seaman M.I."/>
            <person name="Kwitek A.E."/>
            <person name="Lazar J."/>
            <person name="Pasko D."/>
            <person name="Tonellato P.J."/>
            <person name="Twigger S."/>
            <person name="Ponting C.P."/>
            <person name="Duarte J.M."/>
            <person name="Rice S."/>
            <person name="Goodstadt L."/>
            <person name="Beatson S.A."/>
            <person name="Emes R.D."/>
            <person name="Winter E.E."/>
            <person name="Webber C."/>
            <person name="Brandt P."/>
            <person name="Nyakatura G."/>
            <person name="Adetobi M."/>
            <person name="Chiaromonte F."/>
            <person name="Elnitski L."/>
            <person name="Eswara P."/>
            <person name="Hardison R.C."/>
            <person name="Hou M."/>
            <person name="Kolbe D."/>
            <person name="Makova K."/>
            <person name="Miller W."/>
            <person name="Nekrutenko A."/>
            <person name="Riemer C."/>
            <person name="Schwartz S."/>
            <person name="Taylor J."/>
            <person name="Yang S."/>
            <person name="Zhang Y."/>
            <person name="Lindpaintner K."/>
            <person name="Andrews T.D."/>
            <person name="Caccamo M."/>
            <person name="Clamp M."/>
            <person name="Clarke L."/>
            <person name="Curwen V."/>
            <person name="Durbin R.M."/>
            <person name="Eyras E."/>
            <person name="Searle S.M."/>
            <person name="Cooper G.M."/>
            <person name="Batzoglou S."/>
            <person name="Brudno M."/>
            <person name="Sidow A."/>
            <person name="Stone E.A."/>
            <person name="Payseur B.A."/>
            <person name="Bourque G."/>
            <person name="Lopez-Otin C."/>
            <person name="Puente X.S."/>
            <person name="Chakrabarti K."/>
            <person name="Chatterji S."/>
            <person name="Dewey C."/>
            <person name="Pachter L."/>
            <person name="Bray N."/>
            <person name="Yap V.B."/>
            <person name="Caspi A."/>
            <person name="Tesler G."/>
            <person name="Pevzner P.A."/>
            <person name="Haussler D."/>
            <person name="Roskin K.M."/>
            <person name="Baertsch R."/>
            <person name="Clawson H."/>
            <person name="Furey T.S."/>
            <person name="Hinrichs A.S."/>
            <person name="Karolchik D."/>
            <person name="Kent W.J."/>
            <person name="Rosenbloom K.R."/>
            <person name="Trumbower H."/>
            <person name="Weirauch M."/>
            <person name="Cooper D.N."/>
            <person name="Stenson P.D."/>
            <person name="Ma B."/>
            <person name="Brent M."/>
            <person name="Arumugam M."/>
            <person name="Shteynberg D."/>
            <person name="Copley R.R."/>
            <person name="Taylor M.S."/>
            <person name="Riethman H."/>
            <person name="Mudunuri U."/>
            <person name="Peterson J."/>
            <person name="Guyer M."/>
            <person name="Felsenfeld A."/>
            <person name="Old S."/>
            <person name="Mockrin S."/>
            <person name="Collins F.S."/>
        </authorList>
    </citation>
    <scope>NUCLEOTIDE SEQUENCE [LARGE SCALE GENOMIC DNA]</scope>
    <source>
        <strain>Brown Norway</strain>
    </source>
</reference>
<reference key="2">
    <citation type="journal article" date="2004" name="Genome Res.">
        <title>The status, quality, and expansion of the NIH full-length cDNA project: the Mammalian Gene Collection (MGC).</title>
        <authorList>
            <consortium name="The MGC Project Team"/>
        </authorList>
    </citation>
    <scope>NUCLEOTIDE SEQUENCE [LARGE SCALE MRNA] OF 751-1367</scope>
    <source>
        <tissue>Liver</tissue>
    </source>
</reference>
<proteinExistence type="evidence at transcript level"/>
<keyword id="KW-0010">Activator</keyword>
<keyword id="KW-0539">Nucleus</keyword>
<keyword id="KW-1185">Reference proteome</keyword>
<keyword id="KW-0804">Transcription</keyword>
<keyword id="KW-0805">Transcription regulation</keyword>
<dbReference type="EMBL" id="AABR03000314">
    <property type="status" value="NOT_ANNOTATED_CDS"/>
    <property type="molecule type" value="Genomic_DNA"/>
</dbReference>
<dbReference type="EMBL" id="BC090022">
    <property type="protein sequence ID" value="AAH90022.1"/>
    <property type="molecule type" value="mRNA"/>
</dbReference>
<dbReference type="SMR" id="Q5EB59"/>
<dbReference type="FunCoup" id="Q5EB59">
    <property type="interactions" value="3781"/>
</dbReference>
<dbReference type="STRING" id="10116.ENSRNOP00000036610"/>
<dbReference type="iPTMnet" id="Q5EB59"/>
<dbReference type="PhosphoSitePlus" id="Q5EB59"/>
<dbReference type="jPOST" id="Q5EB59"/>
<dbReference type="PaxDb" id="10116-ENSRNOP00000036610"/>
<dbReference type="AGR" id="RGD:1307671"/>
<dbReference type="RGD" id="1307671">
    <property type="gene designation" value="Med23"/>
</dbReference>
<dbReference type="eggNOG" id="KOG1883">
    <property type="taxonomic scope" value="Eukaryota"/>
</dbReference>
<dbReference type="HOGENOM" id="CLU_002773_0_0_1"/>
<dbReference type="InParanoid" id="Q5EB59"/>
<dbReference type="Reactome" id="R-RNO-9841922">
    <property type="pathway name" value="MLL4 and MLL3 complexes regulate expression of PPARG target genes in adipogenesis and hepatic steatosis"/>
</dbReference>
<dbReference type="PRO" id="PR:Q5EB59"/>
<dbReference type="Proteomes" id="UP000002494">
    <property type="component" value="Unplaced"/>
</dbReference>
<dbReference type="GO" id="GO:0070847">
    <property type="term" value="C:core mediator complex"/>
    <property type="evidence" value="ECO:0000266"/>
    <property type="project" value="RGD"/>
</dbReference>
<dbReference type="GO" id="GO:0016592">
    <property type="term" value="C:mediator complex"/>
    <property type="evidence" value="ECO:0000266"/>
    <property type="project" value="RGD"/>
</dbReference>
<dbReference type="GO" id="GO:0005634">
    <property type="term" value="C:nucleus"/>
    <property type="evidence" value="ECO:0000266"/>
    <property type="project" value="RGD"/>
</dbReference>
<dbReference type="GO" id="GO:0005667">
    <property type="term" value="C:transcription regulator complex"/>
    <property type="evidence" value="ECO:0000266"/>
    <property type="project" value="RGD"/>
</dbReference>
<dbReference type="GO" id="GO:0000151">
    <property type="term" value="C:ubiquitin ligase complex"/>
    <property type="evidence" value="ECO:0000314"/>
    <property type="project" value="RGD"/>
</dbReference>
<dbReference type="GO" id="GO:0010628">
    <property type="term" value="P:positive regulation of gene expression"/>
    <property type="evidence" value="ECO:0000266"/>
    <property type="project" value="RGD"/>
</dbReference>
<dbReference type="GO" id="GO:2000409">
    <property type="term" value="P:positive regulation of T cell extravasation"/>
    <property type="evidence" value="ECO:0000266"/>
    <property type="project" value="RGD"/>
</dbReference>
<dbReference type="GO" id="GO:0016567">
    <property type="term" value="P:protein ubiquitination"/>
    <property type="evidence" value="ECO:0000314"/>
    <property type="project" value="RGD"/>
</dbReference>
<dbReference type="GO" id="GO:0006355">
    <property type="term" value="P:regulation of DNA-templated transcription"/>
    <property type="evidence" value="ECO:0000266"/>
    <property type="project" value="RGD"/>
</dbReference>
<dbReference type="GO" id="GO:0006357">
    <property type="term" value="P:regulation of transcription by RNA polymerase II"/>
    <property type="evidence" value="ECO:0000318"/>
    <property type="project" value="GO_Central"/>
</dbReference>
<dbReference type="InterPro" id="IPR021629">
    <property type="entry name" value="Mediator_Med23"/>
</dbReference>
<dbReference type="PANTHER" id="PTHR12691">
    <property type="entry name" value="MEDIATOR OF RNA POLYMERASE II TRANSCRIPTION SUBUNIT 23"/>
    <property type="match status" value="1"/>
</dbReference>
<dbReference type="PANTHER" id="PTHR12691:SF10">
    <property type="entry name" value="MEDIATOR OF RNA POLYMERASE II TRANSCRIPTION SUBUNIT 23"/>
    <property type="match status" value="1"/>
</dbReference>
<dbReference type="Pfam" id="PF11573">
    <property type="entry name" value="Med23"/>
    <property type="match status" value="1"/>
</dbReference>
<comment type="function">
    <text evidence="1">Component of the Mediator complex, a coactivator involved in the regulated transcription of nearly all RNA polymerase II-dependent genes. Mediator functions as a bridge to convey information from gene-specific regulatory proteins to the basal RNA polymerase II transcription machinery. Mediator is recruited to promoters by direct interactions with regulatory proteins and serves as a scaffold for the assembly of a functional pre-initiation complex with RNA polymerase II and the general transcription factors. Also required for transcriptional activation subsequent to the assembly of the pre-initiation complex. Required for transcriptional activation by adenovirus E1A protein. Required for ELK1-dependent transcriptional activation in response to activated Ras signaling (By similarity).</text>
</comment>
<comment type="subunit">
    <text evidence="2 3">Component of the Mediator complex, which is composed of MED1, MED4, MED6, MED7, MED8, MED9, MED10, MED11, MED12, MED13, MED13L, MED14, MED15, MED16, MED17, MED18, MED19, MED20, MED21, MED22, MED23, MED24, MED25, MED26, MED27, MED29, MED30, MED31, CCNC, CDK8 and CDC2L6/CDK11. The MED12, MED13, CCNC and CDK8 subunits form a distinct module termed the CDK8 module. Mediator containing the CDK8 module is less active than Mediator lacking this module in supporting transcriptional activation. Individual preparations of the Mediator complex lacking one or more distinct subunits have been variously termed ARC, CRSP, DRIP, PC2, SMCC and TRAP. Interacts with CDK8, CEBPB, CTNNB1, ELK1 and GLI3. Interacts with the adenovirus E1A protein (By similarity).</text>
</comment>
<comment type="subcellular location">
    <subcellularLocation>
        <location evidence="5">Nucleus</location>
    </subcellularLocation>
</comment>
<comment type="similarity">
    <text evidence="5">Belongs to the Mediator complex subunit 23 family.</text>
</comment>
<gene>
    <name type="primary">Med23</name>
    <name type="synonym">Crsp3</name>
</gene>
<feature type="chain" id="PRO_0000305932" description="Mediator of RNA polymerase II transcription subunit 23">
    <location>
        <begin position="1"/>
        <end position="1367"/>
    </location>
</feature>
<feature type="region of interest" description="Disordered" evidence="4">
    <location>
        <begin position="1343"/>
        <end position="1367"/>
    </location>
</feature>
<feature type="compositionally biased region" description="Polar residues" evidence="4">
    <location>
        <begin position="1346"/>
        <end position="1367"/>
    </location>
</feature>
<name>MED23_RAT</name>
<accession>Q5EB59</accession>
<protein>
    <recommendedName>
        <fullName>Mediator of RNA polymerase II transcription subunit 23</fullName>
    </recommendedName>
    <alternativeName>
        <fullName>Cofactor required for Sp1 transcriptional activation subunit 3</fullName>
        <shortName>CRSP complex subunit 3</shortName>
    </alternativeName>
    <alternativeName>
        <fullName>Mediator complex subunit 23</fullName>
    </alternativeName>
</protein>
<evidence type="ECO:0000250" key="1"/>
<evidence type="ECO:0000250" key="2">
    <source>
        <dbReference type="UniProtKB" id="Q80YQ2"/>
    </source>
</evidence>
<evidence type="ECO:0000250" key="3">
    <source>
        <dbReference type="UniProtKB" id="Q9ULK4"/>
    </source>
</evidence>
<evidence type="ECO:0000256" key="4">
    <source>
        <dbReference type="SAM" id="MobiDB-lite"/>
    </source>
</evidence>
<evidence type="ECO:0000305" key="5"/>